<proteinExistence type="inferred from homology"/>
<reference key="1">
    <citation type="journal article" date="2008" name="J. Bacteriol.">
        <title>Comparative genome sequence analysis of multidrug-resistant Acinetobacter baumannii.</title>
        <authorList>
            <person name="Adams M.D."/>
            <person name="Goglin K."/>
            <person name="Molyneaux N."/>
            <person name="Hujer K.M."/>
            <person name="Lavender H."/>
            <person name="Jamison J.J."/>
            <person name="MacDonald I.J."/>
            <person name="Martin K.M."/>
            <person name="Russo T."/>
            <person name="Campagnari A.A."/>
            <person name="Hujer A.M."/>
            <person name="Bonomo R.A."/>
            <person name="Gill S.R."/>
        </authorList>
    </citation>
    <scope>NUCLEOTIDE SEQUENCE [LARGE SCALE GENOMIC DNA]</scope>
    <source>
        <strain>AB0057</strain>
    </source>
</reference>
<comment type="function">
    <text evidence="1">Catalyzes the condensation of pantoate with beta-alanine in an ATP-dependent reaction via a pantoyl-adenylate intermediate.</text>
</comment>
<comment type="catalytic activity">
    <reaction evidence="1">
        <text>(R)-pantoate + beta-alanine + ATP = (R)-pantothenate + AMP + diphosphate + H(+)</text>
        <dbReference type="Rhea" id="RHEA:10912"/>
        <dbReference type="ChEBI" id="CHEBI:15378"/>
        <dbReference type="ChEBI" id="CHEBI:15980"/>
        <dbReference type="ChEBI" id="CHEBI:29032"/>
        <dbReference type="ChEBI" id="CHEBI:30616"/>
        <dbReference type="ChEBI" id="CHEBI:33019"/>
        <dbReference type="ChEBI" id="CHEBI:57966"/>
        <dbReference type="ChEBI" id="CHEBI:456215"/>
        <dbReference type="EC" id="6.3.2.1"/>
    </reaction>
</comment>
<comment type="pathway">
    <text evidence="1">Cofactor biosynthesis; (R)-pantothenate biosynthesis; (R)-pantothenate from (R)-pantoate and beta-alanine: step 1/1.</text>
</comment>
<comment type="subunit">
    <text evidence="1">Homodimer.</text>
</comment>
<comment type="subcellular location">
    <subcellularLocation>
        <location evidence="1">Cytoplasm</location>
    </subcellularLocation>
</comment>
<comment type="miscellaneous">
    <text evidence="1">The reaction proceeds by a bi uni uni bi ping pong mechanism.</text>
</comment>
<comment type="similarity">
    <text evidence="1">Belongs to the pantothenate synthetase family.</text>
</comment>
<keyword id="KW-0067">ATP-binding</keyword>
<keyword id="KW-0963">Cytoplasm</keyword>
<keyword id="KW-0436">Ligase</keyword>
<keyword id="KW-0547">Nucleotide-binding</keyword>
<keyword id="KW-0566">Pantothenate biosynthesis</keyword>
<name>PANC_ACIB5</name>
<sequence>MKTETTIQGLAASLNPARAARKIIGFVPTMGNLHEGHLTLVREAKKLCDVVVVSIFVNPTQFGPGEDFDNYPRTLEQDSRLLADVGCDIIFAPSVEQMYGTQPRLTNISVSQITDDLCGSSRPGHFDGVALVVTKLFNIVQPNYAFFGQKDYQQLAVIRQFVQDLNIPLEVIGVPIVRAEDGLALSSRNGYLTPEQRQVAPVIYQGLKQAEEQLHQGKDLQQVLADLKTLLTDNGFVVDYVEARQPNLLAASQFDRDIVLFVAAKLGGTRLIDNLQVAFTPQ</sequence>
<feature type="chain" id="PRO_1000118133" description="Pantothenate synthetase">
    <location>
        <begin position="1"/>
        <end position="282"/>
    </location>
</feature>
<feature type="active site" description="Proton donor" evidence="1">
    <location>
        <position position="37"/>
    </location>
</feature>
<feature type="binding site" evidence="1">
    <location>
        <begin position="30"/>
        <end position="37"/>
    </location>
    <ligand>
        <name>ATP</name>
        <dbReference type="ChEBI" id="CHEBI:30616"/>
    </ligand>
</feature>
<feature type="binding site" evidence="1">
    <location>
        <position position="61"/>
    </location>
    <ligand>
        <name>(R)-pantoate</name>
        <dbReference type="ChEBI" id="CHEBI:15980"/>
    </ligand>
</feature>
<feature type="binding site" evidence="1">
    <location>
        <position position="61"/>
    </location>
    <ligand>
        <name>beta-alanine</name>
        <dbReference type="ChEBI" id="CHEBI:57966"/>
    </ligand>
</feature>
<feature type="binding site" evidence="1">
    <location>
        <begin position="148"/>
        <end position="151"/>
    </location>
    <ligand>
        <name>ATP</name>
        <dbReference type="ChEBI" id="CHEBI:30616"/>
    </ligand>
</feature>
<feature type="binding site" evidence="1">
    <location>
        <position position="154"/>
    </location>
    <ligand>
        <name>(R)-pantoate</name>
        <dbReference type="ChEBI" id="CHEBI:15980"/>
    </ligand>
</feature>
<feature type="binding site" evidence="1">
    <location>
        <position position="177"/>
    </location>
    <ligand>
        <name>ATP</name>
        <dbReference type="ChEBI" id="CHEBI:30616"/>
    </ligand>
</feature>
<feature type="binding site" evidence="1">
    <location>
        <begin position="185"/>
        <end position="188"/>
    </location>
    <ligand>
        <name>ATP</name>
        <dbReference type="ChEBI" id="CHEBI:30616"/>
    </ligand>
</feature>
<dbReference type="EC" id="6.3.2.1" evidence="1"/>
<dbReference type="EMBL" id="CP001182">
    <property type="protein sequence ID" value="ACJ40110.1"/>
    <property type="molecule type" value="Genomic_DNA"/>
</dbReference>
<dbReference type="RefSeq" id="WP_000846362.1">
    <property type="nucleotide sequence ID" value="NC_011586.2"/>
</dbReference>
<dbReference type="SMR" id="B7I683"/>
<dbReference type="GeneID" id="92892565"/>
<dbReference type="KEGG" id="abn:AB57_0690"/>
<dbReference type="HOGENOM" id="CLU_047148_0_0_6"/>
<dbReference type="UniPathway" id="UPA00028">
    <property type="reaction ID" value="UER00005"/>
</dbReference>
<dbReference type="Proteomes" id="UP000007094">
    <property type="component" value="Chromosome"/>
</dbReference>
<dbReference type="GO" id="GO:0005829">
    <property type="term" value="C:cytosol"/>
    <property type="evidence" value="ECO:0007669"/>
    <property type="project" value="TreeGrafter"/>
</dbReference>
<dbReference type="GO" id="GO:0005524">
    <property type="term" value="F:ATP binding"/>
    <property type="evidence" value="ECO:0007669"/>
    <property type="project" value="UniProtKB-KW"/>
</dbReference>
<dbReference type="GO" id="GO:0004592">
    <property type="term" value="F:pantoate-beta-alanine ligase activity"/>
    <property type="evidence" value="ECO:0007669"/>
    <property type="project" value="UniProtKB-UniRule"/>
</dbReference>
<dbReference type="GO" id="GO:0015940">
    <property type="term" value="P:pantothenate biosynthetic process"/>
    <property type="evidence" value="ECO:0007669"/>
    <property type="project" value="UniProtKB-UniRule"/>
</dbReference>
<dbReference type="CDD" id="cd00560">
    <property type="entry name" value="PanC"/>
    <property type="match status" value="1"/>
</dbReference>
<dbReference type="FunFam" id="3.40.50.620:FF:000013">
    <property type="entry name" value="Pantothenate synthetase"/>
    <property type="match status" value="1"/>
</dbReference>
<dbReference type="Gene3D" id="3.40.50.620">
    <property type="entry name" value="HUPs"/>
    <property type="match status" value="1"/>
</dbReference>
<dbReference type="Gene3D" id="3.30.1300.10">
    <property type="entry name" value="Pantoate-beta-alanine ligase, C-terminal domain"/>
    <property type="match status" value="1"/>
</dbReference>
<dbReference type="HAMAP" id="MF_00158">
    <property type="entry name" value="PanC"/>
    <property type="match status" value="1"/>
</dbReference>
<dbReference type="InterPro" id="IPR004821">
    <property type="entry name" value="Cyt_trans-like"/>
</dbReference>
<dbReference type="InterPro" id="IPR003721">
    <property type="entry name" value="Pantoate_ligase"/>
</dbReference>
<dbReference type="InterPro" id="IPR042176">
    <property type="entry name" value="Pantoate_ligase_C"/>
</dbReference>
<dbReference type="InterPro" id="IPR014729">
    <property type="entry name" value="Rossmann-like_a/b/a_fold"/>
</dbReference>
<dbReference type="NCBIfam" id="TIGR00125">
    <property type="entry name" value="cyt_tran_rel"/>
    <property type="match status" value="1"/>
</dbReference>
<dbReference type="NCBIfam" id="TIGR00018">
    <property type="entry name" value="panC"/>
    <property type="match status" value="1"/>
</dbReference>
<dbReference type="PANTHER" id="PTHR21299">
    <property type="entry name" value="CYTIDYLATE KINASE/PANTOATE-BETA-ALANINE LIGASE"/>
    <property type="match status" value="1"/>
</dbReference>
<dbReference type="PANTHER" id="PTHR21299:SF1">
    <property type="entry name" value="PANTOATE--BETA-ALANINE LIGASE"/>
    <property type="match status" value="1"/>
</dbReference>
<dbReference type="Pfam" id="PF02569">
    <property type="entry name" value="Pantoate_ligase"/>
    <property type="match status" value="1"/>
</dbReference>
<dbReference type="SUPFAM" id="SSF52374">
    <property type="entry name" value="Nucleotidylyl transferase"/>
    <property type="match status" value="1"/>
</dbReference>
<accession>B7I683</accession>
<protein>
    <recommendedName>
        <fullName evidence="1">Pantothenate synthetase</fullName>
        <shortName evidence="1">PS</shortName>
        <ecNumber evidence="1">6.3.2.1</ecNumber>
    </recommendedName>
    <alternativeName>
        <fullName evidence="1">Pantoate--beta-alanine ligase</fullName>
    </alternativeName>
    <alternativeName>
        <fullName evidence="1">Pantoate-activating enzyme</fullName>
    </alternativeName>
</protein>
<gene>
    <name evidence="1" type="primary">panC</name>
    <name type="ordered locus">AB57_0690</name>
</gene>
<organism>
    <name type="scientific">Acinetobacter baumannii (strain AB0057)</name>
    <dbReference type="NCBI Taxonomy" id="480119"/>
    <lineage>
        <taxon>Bacteria</taxon>
        <taxon>Pseudomonadati</taxon>
        <taxon>Pseudomonadota</taxon>
        <taxon>Gammaproteobacteria</taxon>
        <taxon>Moraxellales</taxon>
        <taxon>Moraxellaceae</taxon>
        <taxon>Acinetobacter</taxon>
        <taxon>Acinetobacter calcoaceticus/baumannii complex</taxon>
    </lineage>
</organism>
<evidence type="ECO:0000255" key="1">
    <source>
        <dbReference type="HAMAP-Rule" id="MF_00158"/>
    </source>
</evidence>